<sequence>MSDINQIEFSEISKKDELKSIIESLLFVSGEPLALKDICRIVEEDFKYVEDLMRELMNIYNGDSSRGIKIISLNGTYQLVTKTKNSEYIQKLLKKNVRQSLSQASLESLAIICYKQPITRVEIDEIRGVKSESAIQRLVEKNLVEETGRLEVPGRPILYGTTDEFLRHFALNDLGDLPSIELFEENNEVSDMVEE</sequence>
<dbReference type="EMBL" id="CP000312">
    <property type="protein sequence ID" value="ABG86270.1"/>
    <property type="molecule type" value="Genomic_DNA"/>
</dbReference>
<dbReference type="RefSeq" id="WP_011592676.1">
    <property type="nucleotide sequence ID" value="NC_008262.1"/>
</dbReference>
<dbReference type="SMR" id="Q0SS19"/>
<dbReference type="KEGG" id="cpr:CPR_1773"/>
<dbReference type="Proteomes" id="UP000001824">
    <property type="component" value="Chromosome"/>
</dbReference>
<dbReference type="GO" id="GO:0005737">
    <property type="term" value="C:cytoplasm"/>
    <property type="evidence" value="ECO:0007669"/>
    <property type="project" value="UniProtKB-SubCell"/>
</dbReference>
<dbReference type="GO" id="GO:0051301">
    <property type="term" value="P:cell division"/>
    <property type="evidence" value="ECO:0007669"/>
    <property type="project" value="UniProtKB-KW"/>
</dbReference>
<dbReference type="GO" id="GO:0051304">
    <property type="term" value="P:chromosome separation"/>
    <property type="evidence" value="ECO:0007669"/>
    <property type="project" value="InterPro"/>
</dbReference>
<dbReference type="GO" id="GO:0006260">
    <property type="term" value="P:DNA replication"/>
    <property type="evidence" value="ECO:0007669"/>
    <property type="project" value="UniProtKB-UniRule"/>
</dbReference>
<dbReference type="Gene3D" id="1.10.10.10">
    <property type="entry name" value="Winged helix-like DNA-binding domain superfamily/Winged helix DNA-binding domain"/>
    <property type="match status" value="2"/>
</dbReference>
<dbReference type="HAMAP" id="MF_01804">
    <property type="entry name" value="ScpB"/>
    <property type="match status" value="1"/>
</dbReference>
<dbReference type="InterPro" id="IPR005234">
    <property type="entry name" value="ScpB_csome_segregation"/>
</dbReference>
<dbReference type="InterPro" id="IPR036388">
    <property type="entry name" value="WH-like_DNA-bd_sf"/>
</dbReference>
<dbReference type="InterPro" id="IPR036390">
    <property type="entry name" value="WH_DNA-bd_sf"/>
</dbReference>
<dbReference type="NCBIfam" id="TIGR00281">
    <property type="entry name" value="SMC-Scp complex subunit ScpB"/>
    <property type="match status" value="1"/>
</dbReference>
<dbReference type="PANTHER" id="PTHR34298">
    <property type="entry name" value="SEGREGATION AND CONDENSATION PROTEIN B"/>
    <property type="match status" value="1"/>
</dbReference>
<dbReference type="PANTHER" id="PTHR34298:SF2">
    <property type="entry name" value="SEGREGATION AND CONDENSATION PROTEIN B"/>
    <property type="match status" value="1"/>
</dbReference>
<dbReference type="Pfam" id="PF04079">
    <property type="entry name" value="SMC_ScpB"/>
    <property type="match status" value="1"/>
</dbReference>
<dbReference type="PIRSF" id="PIRSF019345">
    <property type="entry name" value="ScpB"/>
    <property type="match status" value="1"/>
</dbReference>
<dbReference type="SUPFAM" id="SSF46785">
    <property type="entry name" value="Winged helix' DNA-binding domain"/>
    <property type="match status" value="2"/>
</dbReference>
<accession>Q0SS19</accession>
<comment type="function">
    <text evidence="1">Participates in chromosomal partition during cell division. May act via the formation of a condensin-like complex containing Smc and ScpA that pull DNA away from mid-cell into both cell halves.</text>
</comment>
<comment type="subunit">
    <text evidence="1">Homodimer. Homodimerization may be required to stabilize the binding of ScpA to the Smc head domains. Component of a cohesin-like complex composed of ScpA, ScpB and the Smc homodimer, in which ScpA and ScpB bind to the head domain of Smc. The presence of the three proteins is required for the association of the complex with DNA.</text>
</comment>
<comment type="subcellular location">
    <subcellularLocation>
        <location evidence="1">Cytoplasm</location>
    </subcellularLocation>
    <text evidence="1">Associated with two foci at the outer edges of the nucleoid region in young cells, and at four foci within both cell halves in older cells.</text>
</comment>
<comment type="similarity">
    <text evidence="1">Belongs to the ScpB family.</text>
</comment>
<proteinExistence type="inferred from homology"/>
<evidence type="ECO:0000255" key="1">
    <source>
        <dbReference type="HAMAP-Rule" id="MF_01804"/>
    </source>
</evidence>
<feature type="chain" id="PRO_0000273299" description="Segregation and condensation protein B">
    <location>
        <begin position="1"/>
        <end position="195"/>
    </location>
</feature>
<protein>
    <recommendedName>
        <fullName evidence="1">Segregation and condensation protein B</fullName>
    </recommendedName>
</protein>
<reference key="1">
    <citation type="journal article" date="2006" name="Genome Res.">
        <title>Skewed genomic variability in strains of the toxigenic bacterial pathogen, Clostridium perfringens.</title>
        <authorList>
            <person name="Myers G.S.A."/>
            <person name="Rasko D.A."/>
            <person name="Cheung J.K."/>
            <person name="Ravel J."/>
            <person name="Seshadri R."/>
            <person name="DeBoy R.T."/>
            <person name="Ren Q."/>
            <person name="Varga J."/>
            <person name="Awad M.M."/>
            <person name="Brinkac L.M."/>
            <person name="Daugherty S.C."/>
            <person name="Haft D.H."/>
            <person name="Dodson R.J."/>
            <person name="Madupu R."/>
            <person name="Nelson W.C."/>
            <person name="Rosovitz M.J."/>
            <person name="Sullivan S.A."/>
            <person name="Khouri H."/>
            <person name="Dimitrov G.I."/>
            <person name="Watkins K.L."/>
            <person name="Mulligan S."/>
            <person name="Benton J."/>
            <person name="Radune D."/>
            <person name="Fisher D.J."/>
            <person name="Atkins H.S."/>
            <person name="Hiscox T."/>
            <person name="Jost B.H."/>
            <person name="Billington S.J."/>
            <person name="Songer J.G."/>
            <person name="McClane B.A."/>
            <person name="Titball R.W."/>
            <person name="Rood J.I."/>
            <person name="Melville S.B."/>
            <person name="Paulsen I.T."/>
        </authorList>
    </citation>
    <scope>NUCLEOTIDE SEQUENCE [LARGE SCALE GENOMIC DNA]</scope>
    <source>
        <strain>SM101 / Type A</strain>
    </source>
</reference>
<name>SCPB_CLOPS</name>
<keyword id="KW-0131">Cell cycle</keyword>
<keyword id="KW-0132">Cell division</keyword>
<keyword id="KW-0159">Chromosome partition</keyword>
<keyword id="KW-0963">Cytoplasm</keyword>
<organism>
    <name type="scientific">Clostridium perfringens (strain SM101 / Type A)</name>
    <dbReference type="NCBI Taxonomy" id="289380"/>
    <lineage>
        <taxon>Bacteria</taxon>
        <taxon>Bacillati</taxon>
        <taxon>Bacillota</taxon>
        <taxon>Clostridia</taxon>
        <taxon>Eubacteriales</taxon>
        <taxon>Clostridiaceae</taxon>
        <taxon>Clostridium</taxon>
    </lineage>
</organism>
<gene>
    <name evidence="1" type="primary">scpB</name>
    <name type="ordered locus">CPR_1773</name>
</gene>